<sequence length="578" mass="63660">MIQGVIQKIAGPAVIAKGMLGARMYDICKVGEEGLVGEIIRLDGDTAFVQVYEDTSGLKVGEPVVSTGLPLAVELGPGMLNGIYDGIQRPLERIREKTGIYITRGVVVHALDREKKWAWTPMVKPGDEVRGGMVLGTVPEFSFTHKILVPPDVRGRVKEVKPAGEYTVEEPVVVLEDGTELKMYHTWPVRRARPVQRKLDPNTPFLTGMRILDVLFPVAMGGTAAIPGPFGSGKTVTQQSLAKWSNADVVVYVGCGERGNEMTDVLVEFPELTDPKTGGPLMHRTVLIANTSNMPVAAREASIYVGVTIAEYFRDQGFSVALMADSTSRWAEALREISSRLEEMPAEEGYPPYLAARLAAFYERAGKVITLGGEEGAVTIVGAVSPPGGDMSEPVTQSTLRIVGAFWRLDASLAFRRHFPAINWNGSYSLFTSALDPWYRENVAEDYPELRDAISELLQREAGLQEIVQLVGPDALQDAERLVIEVGRIIREDFLQQNAFHEVDAYCSMRKAYGIMKMILAFYKEAEAAIKRGVSIDEILQLPVVERIGRARYVSEEEFPAYFEEAMKEIQGAFKALA</sequence>
<proteinExistence type="inferred from homology"/>
<accession>Q72J72</accession>
<gene>
    <name evidence="1" type="primary">atpA</name>
    <name type="ordered locus">TT_C0907</name>
</gene>
<protein>
    <recommendedName>
        <fullName evidence="1">V-type ATP synthase alpha chain</fullName>
        <ecNumber evidence="1">7.1.2.2</ecNumber>
    </recommendedName>
    <alternativeName>
        <fullName evidence="1">V-ATPase subunit A</fullName>
    </alternativeName>
</protein>
<dbReference type="EC" id="7.1.2.2" evidence="1"/>
<dbReference type="EMBL" id="AE017221">
    <property type="protein sequence ID" value="AAS81251.1"/>
    <property type="molecule type" value="Genomic_DNA"/>
</dbReference>
<dbReference type="RefSeq" id="WP_011173334.1">
    <property type="nucleotide sequence ID" value="NC_005835.1"/>
</dbReference>
<dbReference type="SMR" id="Q72J72"/>
<dbReference type="KEGG" id="tth:TT_C0907"/>
<dbReference type="eggNOG" id="COG1155">
    <property type="taxonomic scope" value="Bacteria"/>
</dbReference>
<dbReference type="HOGENOM" id="CLU_008162_3_1_0"/>
<dbReference type="OrthoDB" id="9803053at2"/>
<dbReference type="Proteomes" id="UP000000592">
    <property type="component" value="Chromosome"/>
</dbReference>
<dbReference type="GO" id="GO:0045259">
    <property type="term" value="C:proton-transporting ATP synthase complex"/>
    <property type="evidence" value="ECO:0007669"/>
    <property type="project" value="UniProtKB-ARBA"/>
</dbReference>
<dbReference type="GO" id="GO:0005524">
    <property type="term" value="F:ATP binding"/>
    <property type="evidence" value="ECO:0007669"/>
    <property type="project" value="UniProtKB-UniRule"/>
</dbReference>
<dbReference type="GO" id="GO:0046933">
    <property type="term" value="F:proton-transporting ATP synthase activity, rotational mechanism"/>
    <property type="evidence" value="ECO:0007669"/>
    <property type="project" value="UniProtKB-UniRule"/>
</dbReference>
<dbReference type="GO" id="GO:0046961">
    <property type="term" value="F:proton-transporting ATPase activity, rotational mechanism"/>
    <property type="evidence" value="ECO:0007669"/>
    <property type="project" value="InterPro"/>
</dbReference>
<dbReference type="GO" id="GO:0042777">
    <property type="term" value="P:proton motive force-driven plasma membrane ATP synthesis"/>
    <property type="evidence" value="ECO:0007669"/>
    <property type="project" value="UniProtKB-UniRule"/>
</dbReference>
<dbReference type="CDD" id="cd18111">
    <property type="entry name" value="ATP-synt_V_A-type_alpha_C"/>
    <property type="match status" value="1"/>
</dbReference>
<dbReference type="CDD" id="cd18119">
    <property type="entry name" value="ATP-synt_V_A-type_alpha_N"/>
    <property type="match status" value="1"/>
</dbReference>
<dbReference type="CDD" id="cd01134">
    <property type="entry name" value="V_A-ATPase_A"/>
    <property type="match status" value="1"/>
</dbReference>
<dbReference type="FunFam" id="1.10.1140.10:FF:000002">
    <property type="entry name" value="V-type proton ATPase catalytic subunit A"/>
    <property type="match status" value="1"/>
</dbReference>
<dbReference type="FunFam" id="2.40.30.20:FF:000002">
    <property type="entry name" value="V-type proton ATPase catalytic subunit A"/>
    <property type="match status" value="1"/>
</dbReference>
<dbReference type="FunFam" id="2.40.50.100:FF:000008">
    <property type="entry name" value="V-type proton ATPase catalytic subunit A"/>
    <property type="match status" value="1"/>
</dbReference>
<dbReference type="Gene3D" id="2.40.30.20">
    <property type="match status" value="1"/>
</dbReference>
<dbReference type="Gene3D" id="2.40.50.100">
    <property type="match status" value="1"/>
</dbReference>
<dbReference type="Gene3D" id="1.10.1140.10">
    <property type="entry name" value="Bovine Mitochondrial F1-atpase, Atp Synthase Beta Chain, Chain D, domain 3"/>
    <property type="match status" value="1"/>
</dbReference>
<dbReference type="Gene3D" id="3.40.50.300">
    <property type="entry name" value="P-loop containing nucleotide triphosphate hydrolases"/>
    <property type="match status" value="1"/>
</dbReference>
<dbReference type="HAMAP" id="MF_00309">
    <property type="entry name" value="ATP_synth_A_arch"/>
    <property type="match status" value="1"/>
</dbReference>
<dbReference type="InterPro" id="IPR055190">
    <property type="entry name" value="ATP-synt_VA_C"/>
</dbReference>
<dbReference type="InterPro" id="IPR031686">
    <property type="entry name" value="ATP-synth_a_Xtn"/>
</dbReference>
<dbReference type="InterPro" id="IPR023366">
    <property type="entry name" value="ATP_synth_asu-like_sf"/>
</dbReference>
<dbReference type="InterPro" id="IPR020003">
    <property type="entry name" value="ATPase_a/bsu_AS"/>
</dbReference>
<dbReference type="InterPro" id="IPR004100">
    <property type="entry name" value="ATPase_F1/V1/A1_a/bsu_N"/>
</dbReference>
<dbReference type="InterPro" id="IPR036121">
    <property type="entry name" value="ATPase_F1/V1/A1_a/bsu_N_sf"/>
</dbReference>
<dbReference type="InterPro" id="IPR000194">
    <property type="entry name" value="ATPase_F1/V1/A1_a/bsu_nucl-bd"/>
</dbReference>
<dbReference type="InterPro" id="IPR024034">
    <property type="entry name" value="ATPase_F1/V1_b/a_C"/>
</dbReference>
<dbReference type="InterPro" id="IPR027417">
    <property type="entry name" value="P-loop_NTPase"/>
</dbReference>
<dbReference type="InterPro" id="IPR022878">
    <property type="entry name" value="V-ATPase_asu"/>
</dbReference>
<dbReference type="NCBIfam" id="NF003220">
    <property type="entry name" value="PRK04192.1"/>
    <property type="match status" value="1"/>
</dbReference>
<dbReference type="PANTHER" id="PTHR43607:SF1">
    <property type="entry name" value="H(+)-TRANSPORTING TWO-SECTOR ATPASE"/>
    <property type="match status" value="1"/>
</dbReference>
<dbReference type="PANTHER" id="PTHR43607">
    <property type="entry name" value="V-TYPE PROTON ATPASE CATALYTIC SUBUNIT A"/>
    <property type="match status" value="1"/>
</dbReference>
<dbReference type="Pfam" id="PF00006">
    <property type="entry name" value="ATP-synt_ab"/>
    <property type="match status" value="1"/>
</dbReference>
<dbReference type="Pfam" id="PF02874">
    <property type="entry name" value="ATP-synt_ab_N"/>
    <property type="match status" value="1"/>
</dbReference>
<dbReference type="Pfam" id="PF16886">
    <property type="entry name" value="ATP-synt_ab_Xtn"/>
    <property type="match status" value="1"/>
</dbReference>
<dbReference type="Pfam" id="PF22919">
    <property type="entry name" value="ATP-synt_VA_C"/>
    <property type="match status" value="1"/>
</dbReference>
<dbReference type="SUPFAM" id="SSF47917">
    <property type="entry name" value="C-terminal domain of alpha and beta subunits of F1 ATP synthase"/>
    <property type="match status" value="1"/>
</dbReference>
<dbReference type="SUPFAM" id="SSF50615">
    <property type="entry name" value="N-terminal domain of alpha and beta subunits of F1 ATP synthase"/>
    <property type="match status" value="1"/>
</dbReference>
<dbReference type="SUPFAM" id="SSF52540">
    <property type="entry name" value="P-loop containing nucleoside triphosphate hydrolases"/>
    <property type="match status" value="1"/>
</dbReference>
<dbReference type="PROSITE" id="PS00152">
    <property type="entry name" value="ATPASE_ALPHA_BETA"/>
    <property type="match status" value="1"/>
</dbReference>
<keyword id="KW-0066">ATP synthesis</keyword>
<keyword id="KW-0067">ATP-binding</keyword>
<keyword id="KW-0375">Hydrogen ion transport</keyword>
<keyword id="KW-0406">Ion transport</keyword>
<keyword id="KW-0547">Nucleotide-binding</keyword>
<keyword id="KW-1278">Translocase</keyword>
<keyword id="KW-0813">Transport</keyword>
<reference key="1">
    <citation type="journal article" date="2004" name="Nat. Biotechnol.">
        <title>The genome sequence of the extreme thermophile Thermus thermophilus.</title>
        <authorList>
            <person name="Henne A."/>
            <person name="Brueggemann H."/>
            <person name="Raasch C."/>
            <person name="Wiezer A."/>
            <person name="Hartsch T."/>
            <person name="Liesegang H."/>
            <person name="Johann A."/>
            <person name="Lienard T."/>
            <person name="Gohl O."/>
            <person name="Martinez-Arias R."/>
            <person name="Jacobi C."/>
            <person name="Starkuviene V."/>
            <person name="Schlenczeck S."/>
            <person name="Dencker S."/>
            <person name="Huber R."/>
            <person name="Klenk H.-P."/>
            <person name="Kramer W."/>
            <person name="Merkl R."/>
            <person name="Gottschalk G."/>
            <person name="Fritz H.-J."/>
        </authorList>
    </citation>
    <scope>NUCLEOTIDE SEQUENCE [LARGE SCALE GENOMIC DNA]</scope>
    <source>
        <strain>ATCC BAA-163 / DSM 7039 / HB27</strain>
    </source>
</reference>
<organism>
    <name type="scientific">Thermus thermophilus (strain ATCC BAA-163 / DSM 7039 / HB27)</name>
    <dbReference type="NCBI Taxonomy" id="262724"/>
    <lineage>
        <taxon>Bacteria</taxon>
        <taxon>Thermotogati</taxon>
        <taxon>Deinococcota</taxon>
        <taxon>Deinococci</taxon>
        <taxon>Thermales</taxon>
        <taxon>Thermaceae</taxon>
        <taxon>Thermus</taxon>
    </lineage>
</organism>
<feature type="chain" id="PRO_1000059360" description="V-type ATP synthase alpha chain">
    <location>
        <begin position="1"/>
        <end position="578"/>
    </location>
</feature>
<feature type="binding site" evidence="1">
    <location>
        <begin position="228"/>
        <end position="235"/>
    </location>
    <ligand>
        <name>ATP</name>
        <dbReference type="ChEBI" id="CHEBI:30616"/>
    </ligand>
</feature>
<name>VATA_THET2</name>
<comment type="function">
    <text evidence="1">Produces ATP from ADP in the presence of a proton gradient across the membrane. The V-type alpha chain is a catalytic subunit.</text>
</comment>
<comment type="catalytic activity">
    <reaction evidence="1">
        <text>ATP + H2O + 4 H(+)(in) = ADP + phosphate + 5 H(+)(out)</text>
        <dbReference type="Rhea" id="RHEA:57720"/>
        <dbReference type="ChEBI" id="CHEBI:15377"/>
        <dbReference type="ChEBI" id="CHEBI:15378"/>
        <dbReference type="ChEBI" id="CHEBI:30616"/>
        <dbReference type="ChEBI" id="CHEBI:43474"/>
        <dbReference type="ChEBI" id="CHEBI:456216"/>
        <dbReference type="EC" id="7.1.2.2"/>
    </reaction>
</comment>
<comment type="similarity">
    <text evidence="1">Belongs to the ATPase alpha/beta chains family.</text>
</comment>
<evidence type="ECO:0000255" key="1">
    <source>
        <dbReference type="HAMAP-Rule" id="MF_00309"/>
    </source>
</evidence>